<evidence type="ECO:0000255" key="1">
    <source>
        <dbReference type="HAMAP-Rule" id="MF_00185"/>
    </source>
</evidence>
<comment type="function">
    <text evidence="1">Catalyzes the transfer of a dimethylallyl group onto the adenine at position 37 in tRNAs that read codons beginning with uridine, leading to the formation of N6-(dimethylallyl)adenosine (i(6)A).</text>
</comment>
<comment type="catalytic activity">
    <reaction evidence="1">
        <text>adenosine(37) in tRNA + dimethylallyl diphosphate = N(6)-dimethylallyladenosine(37) in tRNA + diphosphate</text>
        <dbReference type="Rhea" id="RHEA:26482"/>
        <dbReference type="Rhea" id="RHEA-COMP:10162"/>
        <dbReference type="Rhea" id="RHEA-COMP:10375"/>
        <dbReference type="ChEBI" id="CHEBI:33019"/>
        <dbReference type="ChEBI" id="CHEBI:57623"/>
        <dbReference type="ChEBI" id="CHEBI:74411"/>
        <dbReference type="ChEBI" id="CHEBI:74415"/>
        <dbReference type="EC" id="2.5.1.75"/>
    </reaction>
</comment>
<comment type="cofactor">
    <cofactor evidence="1">
        <name>Mg(2+)</name>
        <dbReference type="ChEBI" id="CHEBI:18420"/>
    </cofactor>
</comment>
<comment type="subunit">
    <text evidence="1">Monomer.</text>
</comment>
<comment type="similarity">
    <text evidence="1">Belongs to the IPP transferase family.</text>
</comment>
<reference key="1">
    <citation type="submission" date="2006-10" db="EMBL/GenBank/DDBJ databases">
        <authorList>
            <person name="Fleischmann R.D."/>
            <person name="Dodson R.J."/>
            <person name="Haft D.H."/>
            <person name="Merkel J.S."/>
            <person name="Nelson W.C."/>
            <person name="Fraser C.M."/>
        </authorList>
    </citation>
    <scope>NUCLEOTIDE SEQUENCE [LARGE SCALE GENOMIC DNA]</scope>
    <source>
        <strain>104</strain>
    </source>
</reference>
<accession>A0QIQ9</accession>
<gene>
    <name evidence="1" type="primary">miaA</name>
    <name type="ordered locus">MAV_3620</name>
</gene>
<organism>
    <name type="scientific">Mycobacterium avium (strain 104)</name>
    <dbReference type="NCBI Taxonomy" id="243243"/>
    <lineage>
        <taxon>Bacteria</taxon>
        <taxon>Bacillati</taxon>
        <taxon>Actinomycetota</taxon>
        <taxon>Actinomycetes</taxon>
        <taxon>Mycobacteriales</taxon>
        <taxon>Mycobacteriaceae</taxon>
        <taxon>Mycobacterium</taxon>
        <taxon>Mycobacterium avium complex (MAC)</taxon>
    </lineage>
</organism>
<protein>
    <recommendedName>
        <fullName evidence="1">tRNA dimethylallyltransferase</fullName>
        <ecNumber evidence="1">2.5.1.75</ecNumber>
    </recommendedName>
    <alternativeName>
        <fullName evidence="1">Dimethylallyl diphosphate:tRNA dimethylallyltransferase</fullName>
        <shortName evidence="1">DMAPP:tRNA dimethylallyltransferase</shortName>
        <shortName evidence="1">DMATase</shortName>
    </alternativeName>
    <alternativeName>
        <fullName evidence="1">Isopentenyl-diphosphate:tRNA isopentenyltransferase</fullName>
        <shortName evidence="1">IPP transferase</shortName>
        <shortName evidence="1">IPPT</shortName>
        <shortName evidence="1">IPTase</shortName>
    </alternativeName>
</protein>
<feature type="chain" id="PRO_0000377224" description="tRNA dimethylallyltransferase">
    <location>
        <begin position="1"/>
        <end position="307"/>
    </location>
</feature>
<feature type="binding site" evidence="1">
    <location>
        <begin position="5"/>
        <end position="12"/>
    </location>
    <ligand>
        <name>ATP</name>
        <dbReference type="ChEBI" id="CHEBI:30616"/>
    </ligand>
</feature>
<feature type="binding site" evidence="1">
    <location>
        <begin position="7"/>
        <end position="12"/>
    </location>
    <ligand>
        <name>substrate</name>
    </ligand>
</feature>
<feature type="site" description="Interaction with substrate tRNA" evidence="1">
    <location>
        <position position="99"/>
    </location>
</feature>
<feature type="site" description="Interaction with substrate tRNA" evidence="1">
    <location>
        <position position="120"/>
    </location>
</feature>
<proteinExistence type="inferred from homology"/>
<dbReference type="EC" id="2.5.1.75" evidence="1"/>
<dbReference type="EMBL" id="CP000479">
    <property type="protein sequence ID" value="ABK65342.1"/>
    <property type="molecule type" value="Genomic_DNA"/>
</dbReference>
<dbReference type="SMR" id="A0QIQ9"/>
<dbReference type="KEGG" id="mav:MAV_3620"/>
<dbReference type="HOGENOM" id="CLU_032616_0_1_11"/>
<dbReference type="Proteomes" id="UP000001574">
    <property type="component" value="Chromosome"/>
</dbReference>
<dbReference type="GO" id="GO:0005524">
    <property type="term" value="F:ATP binding"/>
    <property type="evidence" value="ECO:0007669"/>
    <property type="project" value="UniProtKB-UniRule"/>
</dbReference>
<dbReference type="GO" id="GO:0052381">
    <property type="term" value="F:tRNA dimethylallyltransferase activity"/>
    <property type="evidence" value="ECO:0007669"/>
    <property type="project" value="UniProtKB-UniRule"/>
</dbReference>
<dbReference type="GO" id="GO:0006400">
    <property type="term" value="P:tRNA modification"/>
    <property type="evidence" value="ECO:0007669"/>
    <property type="project" value="TreeGrafter"/>
</dbReference>
<dbReference type="FunFam" id="1.10.20.140:FF:000001">
    <property type="entry name" value="tRNA dimethylallyltransferase"/>
    <property type="match status" value="1"/>
</dbReference>
<dbReference type="Gene3D" id="1.10.20.140">
    <property type="match status" value="1"/>
</dbReference>
<dbReference type="Gene3D" id="3.40.50.300">
    <property type="entry name" value="P-loop containing nucleotide triphosphate hydrolases"/>
    <property type="match status" value="1"/>
</dbReference>
<dbReference type="HAMAP" id="MF_00185">
    <property type="entry name" value="IPP_trans"/>
    <property type="match status" value="1"/>
</dbReference>
<dbReference type="InterPro" id="IPR039657">
    <property type="entry name" value="Dimethylallyltransferase"/>
</dbReference>
<dbReference type="InterPro" id="IPR018022">
    <property type="entry name" value="IPT"/>
</dbReference>
<dbReference type="InterPro" id="IPR027417">
    <property type="entry name" value="P-loop_NTPase"/>
</dbReference>
<dbReference type="NCBIfam" id="TIGR00174">
    <property type="entry name" value="miaA"/>
    <property type="match status" value="1"/>
</dbReference>
<dbReference type="PANTHER" id="PTHR11088">
    <property type="entry name" value="TRNA DIMETHYLALLYLTRANSFERASE"/>
    <property type="match status" value="1"/>
</dbReference>
<dbReference type="PANTHER" id="PTHR11088:SF60">
    <property type="entry name" value="TRNA DIMETHYLALLYLTRANSFERASE"/>
    <property type="match status" value="1"/>
</dbReference>
<dbReference type="Pfam" id="PF01715">
    <property type="entry name" value="IPPT"/>
    <property type="match status" value="1"/>
</dbReference>
<dbReference type="SUPFAM" id="SSF52540">
    <property type="entry name" value="P-loop containing nucleoside triphosphate hydrolases"/>
    <property type="match status" value="1"/>
</dbReference>
<keyword id="KW-0067">ATP-binding</keyword>
<keyword id="KW-0460">Magnesium</keyword>
<keyword id="KW-0547">Nucleotide-binding</keyword>
<keyword id="KW-0808">Transferase</keyword>
<keyword id="KW-0819">tRNA processing</keyword>
<sequence length="307" mass="33246">MAIIGPTGTGKSQLALDVAERLGPLGAEIVNADAMQLYRGMDIGTAKLPVDARRGIPHHQLDVLDVTQTATVARYQRAAAADIEAILAAGAVPIIVGGSMLYIQSLLDDWSFPATDPRVRARWERRLAEVGVGELHAELARRDPAAAAAILPTDARRTVRALEVIELTGRPFAASAPRIGAPRWDTVIIGLDCDTTVLDERLARRTDAMFEQGLVAEVTGLLGRGLRDGVTAARALGYAQVIAALDAGGGDEQLRQAREQTYAGTRRYVRRQRSWFRRDHRVRWLDAGACSPPRLVDAALGAWRHVS</sequence>
<name>MIAA_MYCA1</name>